<sequence length="861" mass="99281">MKKDVTPMMRQYLSIKNKHKDAILFFRVGSFYEMFFDDALEGSKLLGLTLTKREDIPMCGVPCHTSKEYIKKLILLDRKVAICEQGGVQTDPKGPLEREVVEVISPGVVVDEDFLQDDVNNYLVAISDYKDYYSFSYIDLSTSRLGIILYEGSFLEKLRRDIEKYSPKEIIVSESFYYKYLEKLALDRFLVNKVPHWHLDKDIAIKSLKDHFNVLSLSAFGFKEDEPYYISSFLIIDYIKNNLKNLLINIDTIYINSDSEYMFLDDVTQINLELVKNNNDLTARYSLYSVLNDCKTPMGKRLLREYILNPLLDIAAINNRLDHVEFLNNNVNLSIKLREILSNVWDIERIISRLQMRKYAKKDFLFIRETLIAFFSVKRLLNEYSFNYWIFDVNDEGDIRGIYSLIDCAISNEQDELIKQGYNSEIDRLRELKNNASKYVDDYLDFERNFSKINSLKIKRINVRGLFFEVTKSYYGQVPSHFIESQTLNSVKRYKTNKLIELERDINDAEDNLLSLEQEIFDEIALKVVKYSTVIKKVAEFCAYIDVVSNFAYLAKKNEYVRPTLTNNKEIILECARHPVVEHYMKGVEAFTRNSVRIDGEKYFCLITGPNMAGKSTYLRQTALVVLMGHIGSFVPANKAIIGITDKIFCRIGASDNISKGESTFLVEMNETANILRNATQDSLIIMDEVGRGTSTNDGLAIACSIVEYILEDIKARSLFATHFHELSAINHDSFVNLSMKIERQGNELIFLREVEEKPSLNSYGIYVARIAGIPLKVIKRANIILKSLTSRENLCVSEFFTSATSVVNDGEDTMEEDLSYELDLNAYLELKNLISKIDINNITPFQAMNLLSEIILKTKM</sequence>
<comment type="function">
    <text evidence="1">This protein is involved in the repair of mismatches in DNA. It is possible that it carries out the mismatch recognition step. This protein has a weak ATPase activity.</text>
</comment>
<comment type="similarity">
    <text evidence="1">Belongs to the DNA mismatch repair MutS family.</text>
</comment>
<keyword id="KW-0067">ATP-binding</keyword>
<keyword id="KW-0227">DNA damage</keyword>
<keyword id="KW-0234">DNA repair</keyword>
<keyword id="KW-0238">DNA-binding</keyword>
<keyword id="KW-0547">Nucleotide-binding</keyword>
<proteinExistence type="inferred from homology"/>
<accession>B2S1E1</accession>
<evidence type="ECO:0000255" key="1">
    <source>
        <dbReference type="HAMAP-Rule" id="MF_00096"/>
    </source>
</evidence>
<name>MUTS_BORHD</name>
<reference key="1">
    <citation type="submission" date="2004-12" db="EMBL/GenBank/DDBJ databases">
        <title>The genome sequence of Borrelia hermsii and Borrelia turicatae: comparative analysis of two agents of endemic N. America relapsing fever.</title>
        <authorList>
            <person name="Porcella S.F."/>
            <person name="Raffel S.J."/>
            <person name="Schrumpf M.E."/>
            <person name="Montgomery B."/>
            <person name="Smith T."/>
            <person name="Schwan T.G."/>
        </authorList>
    </citation>
    <scope>NUCLEOTIDE SEQUENCE [LARGE SCALE GENOMIC DNA]</scope>
    <source>
        <strain>HS1 / DAH</strain>
    </source>
</reference>
<organism>
    <name type="scientific">Borrelia hermsii (strain HS1 / DAH)</name>
    <dbReference type="NCBI Taxonomy" id="314723"/>
    <lineage>
        <taxon>Bacteria</taxon>
        <taxon>Pseudomonadati</taxon>
        <taxon>Spirochaetota</taxon>
        <taxon>Spirochaetia</taxon>
        <taxon>Spirochaetales</taxon>
        <taxon>Borreliaceae</taxon>
        <taxon>Borrelia</taxon>
    </lineage>
</organism>
<gene>
    <name evidence="1" type="primary">mutS</name>
    <name type="ordered locus">BH0797</name>
</gene>
<protein>
    <recommendedName>
        <fullName evidence="1">DNA mismatch repair protein MutS</fullName>
    </recommendedName>
</protein>
<feature type="chain" id="PRO_1000093608" description="DNA mismatch repair protein MutS">
    <location>
        <begin position="1"/>
        <end position="861"/>
    </location>
</feature>
<feature type="binding site" evidence="1">
    <location>
        <begin position="609"/>
        <end position="616"/>
    </location>
    <ligand>
        <name>ATP</name>
        <dbReference type="ChEBI" id="CHEBI:30616"/>
    </ligand>
</feature>
<dbReference type="EMBL" id="CP000048">
    <property type="protein sequence ID" value="AAX17294.1"/>
    <property type="molecule type" value="Genomic_DNA"/>
</dbReference>
<dbReference type="RefSeq" id="WP_012422544.1">
    <property type="nucleotide sequence ID" value="NZ_CP073136.1"/>
</dbReference>
<dbReference type="SMR" id="B2S1E1"/>
<dbReference type="GeneID" id="71843630"/>
<dbReference type="KEGG" id="bhr:BH0797"/>
<dbReference type="HOGENOM" id="CLU_002472_3_1_12"/>
<dbReference type="Proteomes" id="UP000008834">
    <property type="component" value="Chromosome"/>
</dbReference>
<dbReference type="GO" id="GO:0005829">
    <property type="term" value="C:cytosol"/>
    <property type="evidence" value="ECO:0007669"/>
    <property type="project" value="TreeGrafter"/>
</dbReference>
<dbReference type="GO" id="GO:0005524">
    <property type="term" value="F:ATP binding"/>
    <property type="evidence" value="ECO:0007669"/>
    <property type="project" value="UniProtKB-UniRule"/>
</dbReference>
<dbReference type="GO" id="GO:0140664">
    <property type="term" value="F:ATP-dependent DNA damage sensor activity"/>
    <property type="evidence" value="ECO:0007669"/>
    <property type="project" value="InterPro"/>
</dbReference>
<dbReference type="GO" id="GO:0003684">
    <property type="term" value="F:damaged DNA binding"/>
    <property type="evidence" value="ECO:0007669"/>
    <property type="project" value="UniProtKB-UniRule"/>
</dbReference>
<dbReference type="GO" id="GO:0030983">
    <property type="term" value="F:mismatched DNA binding"/>
    <property type="evidence" value="ECO:0007669"/>
    <property type="project" value="InterPro"/>
</dbReference>
<dbReference type="GO" id="GO:0006298">
    <property type="term" value="P:mismatch repair"/>
    <property type="evidence" value="ECO:0007669"/>
    <property type="project" value="UniProtKB-UniRule"/>
</dbReference>
<dbReference type="CDD" id="cd03284">
    <property type="entry name" value="ABC_MutS1"/>
    <property type="match status" value="1"/>
</dbReference>
<dbReference type="Gene3D" id="1.10.1420.10">
    <property type="match status" value="2"/>
</dbReference>
<dbReference type="Gene3D" id="3.40.1170.10">
    <property type="entry name" value="DNA repair protein MutS, domain I"/>
    <property type="match status" value="1"/>
</dbReference>
<dbReference type="Gene3D" id="3.30.420.110">
    <property type="entry name" value="MutS, connector domain"/>
    <property type="match status" value="1"/>
</dbReference>
<dbReference type="Gene3D" id="3.40.50.300">
    <property type="entry name" value="P-loop containing nucleotide triphosphate hydrolases"/>
    <property type="match status" value="1"/>
</dbReference>
<dbReference type="HAMAP" id="MF_00096">
    <property type="entry name" value="MutS"/>
    <property type="match status" value="1"/>
</dbReference>
<dbReference type="InterPro" id="IPR005748">
    <property type="entry name" value="DNA_mismatch_repair_MutS"/>
</dbReference>
<dbReference type="InterPro" id="IPR007695">
    <property type="entry name" value="DNA_mismatch_repair_MutS-lik_N"/>
</dbReference>
<dbReference type="InterPro" id="IPR017261">
    <property type="entry name" value="DNA_mismatch_repair_MutS/MSH"/>
</dbReference>
<dbReference type="InterPro" id="IPR000432">
    <property type="entry name" value="DNA_mismatch_repair_MutS_C"/>
</dbReference>
<dbReference type="InterPro" id="IPR007861">
    <property type="entry name" value="DNA_mismatch_repair_MutS_clamp"/>
</dbReference>
<dbReference type="InterPro" id="IPR007696">
    <property type="entry name" value="DNA_mismatch_repair_MutS_core"/>
</dbReference>
<dbReference type="InterPro" id="IPR016151">
    <property type="entry name" value="DNA_mismatch_repair_MutS_N"/>
</dbReference>
<dbReference type="InterPro" id="IPR036187">
    <property type="entry name" value="DNA_mismatch_repair_MutS_sf"/>
</dbReference>
<dbReference type="InterPro" id="IPR007860">
    <property type="entry name" value="DNA_mmatch_repair_MutS_con_dom"/>
</dbReference>
<dbReference type="InterPro" id="IPR045076">
    <property type="entry name" value="MutS"/>
</dbReference>
<dbReference type="InterPro" id="IPR036678">
    <property type="entry name" value="MutS_con_dom_sf"/>
</dbReference>
<dbReference type="InterPro" id="IPR027417">
    <property type="entry name" value="P-loop_NTPase"/>
</dbReference>
<dbReference type="NCBIfam" id="TIGR01070">
    <property type="entry name" value="mutS1"/>
    <property type="match status" value="1"/>
</dbReference>
<dbReference type="NCBIfam" id="NF003810">
    <property type="entry name" value="PRK05399.1"/>
    <property type="match status" value="1"/>
</dbReference>
<dbReference type="PANTHER" id="PTHR11361:SF34">
    <property type="entry name" value="DNA MISMATCH REPAIR PROTEIN MSH1, MITOCHONDRIAL"/>
    <property type="match status" value="1"/>
</dbReference>
<dbReference type="PANTHER" id="PTHR11361">
    <property type="entry name" value="DNA MISMATCH REPAIR PROTEIN MUTS FAMILY MEMBER"/>
    <property type="match status" value="1"/>
</dbReference>
<dbReference type="Pfam" id="PF01624">
    <property type="entry name" value="MutS_I"/>
    <property type="match status" value="1"/>
</dbReference>
<dbReference type="Pfam" id="PF05188">
    <property type="entry name" value="MutS_II"/>
    <property type="match status" value="1"/>
</dbReference>
<dbReference type="Pfam" id="PF05192">
    <property type="entry name" value="MutS_III"/>
    <property type="match status" value="1"/>
</dbReference>
<dbReference type="Pfam" id="PF05190">
    <property type="entry name" value="MutS_IV"/>
    <property type="match status" value="1"/>
</dbReference>
<dbReference type="Pfam" id="PF00488">
    <property type="entry name" value="MutS_V"/>
    <property type="match status" value="1"/>
</dbReference>
<dbReference type="PIRSF" id="PIRSF037677">
    <property type="entry name" value="DNA_mis_repair_Msh6"/>
    <property type="match status" value="1"/>
</dbReference>
<dbReference type="SMART" id="SM00534">
    <property type="entry name" value="MUTSac"/>
    <property type="match status" value="1"/>
</dbReference>
<dbReference type="SMART" id="SM00533">
    <property type="entry name" value="MUTSd"/>
    <property type="match status" value="1"/>
</dbReference>
<dbReference type="SUPFAM" id="SSF55271">
    <property type="entry name" value="DNA repair protein MutS, domain I"/>
    <property type="match status" value="1"/>
</dbReference>
<dbReference type="SUPFAM" id="SSF53150">
    <property type="entry name" value="DNA repair protein MutS, domain II"/>
    <property type="match status" value="1"/>
</dbReference>
<dbReference type="SUPFAM" id="SSF48334">
    <property type="entry name" value="DNA repair protein MutS, domain III"/>
    <property type="match status" value="1"/>
</dbReference>
<dbReference type="SUPFAM" id="SSF52540">
    <property type="entry name" value="P-loop containing nucleoside triphosphate hydrolases"/>
    <property type="match status" value="1"/>
</dbReference>
<dbReference type="PROSITE" id="PS00486">
    <property type="entry name" value="DNA_MISMATCH_REPAIR_2"/>
    <property type="match status" value="1"/>
</dbReference>